<name>CSPB_GEOSE</name>
<reference key="1">
    <citation type="journal article" date="1993" name="Gene">
        <title>Mapping of the Bacillus subtilis cspB gene and cloning of its homologs in thermophilic, mesophilic and psychrotrophic bacilli.</title>
        <authorList>
            <person name="Schroeder K."/>
            <person name="Zuber P."/>
            <person name="Willimsky G."/>
            <person name="Wagner B."/>
            <person name="Marahiel M.A."/>
        </authorList>
    </citation>
    <scope>NUCLEOTIDE SEQUENCE [GENOMIC DNA]</scope>
</reference>
<comment type="function">
    <text>Affects cell viability at low temperatures.</text>
</comment>
<comment type="subunit">
    <text evidence="1">Homodimer.</text>
</comment>
<comment type="subcellular location">
    <subcellularLocation>
        <location>Cytoplasm</location>
    </subcellularLocation>
</comment>
<comment type="induction">
    <text>In response to low temperature.</text>
</comment>
<evidence type="ECO:0000250" key="1"/>
<gene>
    <name type="primary">cspB</name>
</gene>
<protein>
    <recommendedName>
        <fullName>Cold shock protein CspB</fullName>
    </recommendedName>
    <alternativeName>
        <fullName>Major cold shock protein</fullName>
    </alternativeName>
</protein>
<keyword id="KW-0010">Activator</keyword>
<keyword id="KW-0963">Cytoplasm</keyword>
<keyword id="KW-0238">DNA-binding</keyword>
<keyword id="KW-0346">Stress response</keyword>
<keyword id="KW-0804">Transcription</keyword>
<keyword id="KW-0805">Transcription regulation</keyword>
<proteinExistence type="evidence at transcript level"/>
<sequence>MQRGKVKWFNNEKGYGFIEVEGGSDVFVHFTAIQGEGFKSLEEGQEVSFEIVQGNRGPQAANVVKL</sequence>
<feature type="chain" id="PRO_0000100298" description="Cold shock protein CspB">
    <location>
        <begin position="1"/>
        <end position="66"/>
    </location>
</feature>
<feature type="domain" description="CSD">
    <location>
        <begin position="4"/>
        <end position="63"/>
    </location>
</feature>
<dbReference type="EMBL" id="X73375">
    <property type="protein sequence ID" value="CAA51792.1"/>
    <property type="molecule type" value="Genomic_DNA"/>
</dbReference>
<dbReference type="PIR" id="I40390">
    <property type="entry name" value="I40390"/>
</dbReference>
<dbReference type="SMR" id="P42016"/>
<dbReference type="OrthoDB" id="9805039at2"/>
<dbReference type="GO" id="GO:0005737">
    <property type="term" value="C:cytoplasm"/>
    <property type="evidence" value="ECO:0007669"/>
    <property type="project" value="UniProtKB-SubCell"/>
</dbReference>
<dbReference type="GO" id="GO:0003677">
    <property type="term" value="F:DNA binding"/>
    <property type="evidence" value="ECO:0007669"/>
    <property type="project" value="UniProtKB-KW"/>
</dbReference>
<dbReference type="CDD" id="cd04458">
    <property type="entry name" value="CSP_CDS"/>
    <property type="match status" value="1"/>
</dbReference>
<dbReference type="FunFam" id="2.40.50.140:FF:000006">
    <property type="entry name" value="Cold shock protein CspC"/>
    <property type="match status" value="1"/>
</dbReference>
<dbReference type="Gene3D" id="6.20.370.130">
    <property type="match status" value="1"/>
</dbReference>
<dbReference type="Gene3D" id="2.40.50.140">
    <property type="entry name" value="Nucleic acid-binding proteins"/>
    <property type="match status" value="1"/>
</dbReference>
<dbReference type="InterPro" id="IPR012156">
    <property type="entry name" value="Cold_shock_CspA"/>
</dbReference>
<dbReference type="InterPro" id="IPR050181">
    <property type="entry name" value="Cold_shock_domain"/>
</dbReference>
<dbReference type="InterPro" id="IPR011129">
    <property type="entry name" value="CSD"/>
</dbReference>
<dbReference type="InterPro" id="IPR019844">
    <property type="entry name" value="CSD_CS"/>
</dbReference>
<dbReference type="InterPro" id="IPR002059">
    <property type="entry name" value="CSP_DNA-bd"/>
</dbReference>
<dbReference type="InterPro" id="IPR012340">
    <property type="entry name" value="NA-bd_OB-fold"/>
</dbReference>
<dbReference type="PANTHER" id="PTHR11544">
    <property type="entry name" value="COLD SHOCK DOMAIN CONTAINING PROTEINS"/>
    <property type="match status" value="1"/>
</dbReference>
<dbReference type="Pfam" id="PF00313">
    <property type="entry name" value="CSD"/>
    <property type="match status" value="1"/>
</dbReference>
<dbReference type="PIRSF" id="PIRSF002599">
    <property type="entry name" value="Cold_shock_A"/>
    <property type="match status" value="1"/>
</dbReference>
<dbReference type="PRINTS" id="PR00050">
    <property type="entry name" value="COLDSHOCK"/>
</dbReference>
<dbReference type="SMART" id="SM00357">
    <property type="entry name" value="CSP"/>
    <property type="match status" value="1"/>
</dbReference>
<dbReference type="SUPFAM" id="SSF50249">
    <property type="entry name" value="Nucleic acid-binding proteins"/>
    <property type="match status" value="1"/>
</dbReference>
<dbReference type="PROSITE" id="PS00352">
    <property type="entry name" value="CSD_1"/>
    <property type="match status" value="1"/>
</dbReference>
<dbReference type="PROSITE" id="PS51857">
    <property type="entry name" value="CSD_2"/>
    <property type="match status" value="1"/>
</dbReference>
<accession>P42016</accession>
<organism>
    <name type="scientific">Geobacillus stearothermophilus</name>
    <name type="common">Bacillus stearothermophilus</name>
    <dbReference type="NCBI Taxonomy" id="1422"/>
    <lineage>
        <taxon>Bacteria</taxon>
        <taxon>Bacillati</taxon>
        <taxon>Bacillota</taxon>
        <taxon>Bacilli</taxon>
        <taxon>Bacillales</taxon>
        <taxon>Anoxybacillaceae</taxon>
        <taxon>Geobacillus</taxon>
    </lineage>
</organism>